<accession>Q6KHU4</accession>
<evidence type="ECO:0000255" key="1">
    <source>
        <dbReference type="HAMAP-Rule" id="MF_00009"/>
    </source>
</evidence>
<reference key="1">
    <citation type="journal article" date="2004" name="Genome Res.">
        <title>The complete genome and proteome of Mycoplasma mobile.</title>
        <authorList>
            <person name="Jaffe J.D."/>
            <person name="Stange-Thomann N."/>
            <person name="Smith C."/>
            <person name="DeCaprio D."/>
            <person name="Fisher S."/>
            <person name="Butler J."/>
            <person name="Calvo S."/>
            <person name="Elkins T."/>
            <person name="FitzGerald M.G."/>
            <person name="Hafez N."/>
            <person name="Kodira C.D."/>
            <person name="Major J."/>
            <person name="Wang S."/>
            <person name="Wilkinson J."/>
            <person name="Nicol R."/>
            <person name="Nusbaum C."/>
            <person name="Birren B."/>
            <person name="Berg H.C."/>
            <person name="Church G.M."/>
        </authorList>
    </citation>
    <scope>NUCLEOTIDE SEQUENCE [LARGE SCALE GENOMIC DNA]</scope>
    <source>
        <strain>ATCC 43663 / NCTC 11711 / 163 K</strain>
    </source>
</reference>
<name>YBEY_MYCM1</name>
<protein>
    <recommendedName>
        <fullName evidence="1">Endoribonuclease YbeY</fullName>
        <ecNumber evidence="1">3.1.-.-</ecNumber>
    </recommendedName>
</protein>
<sequence>MENNLNLCNQTNYRFRYKKDFQNILDEIALFFKEKLPLELDLNIVDNILIKKISKQYYKKDKETDVLSFPSELANMKNALGFFHIGEIFLNYEKVILQAKEYNHSLKREFCYLFTHGIIHLYGYDHVKENEAKEMNAIVESIMQKLNIKRRK</sequence>
<comment type="function">
    <text evidence="1">Single strand-specific metallo-endoribonuclease involved in late-stage 70S ribosome quality control and in maturation of the 3' terminus of the 16S rRNA.</text>
</comment>
<comment type="cofactor">
    <cofactor evidence="1">
        <name>Zn(2+)</name>
        <dbReference type="ChEBI" id="CHEBI:29105"/>
    </cofactor>
    <text evidence="1">Binds 1 zinc ion.</text>
</comment>
<comment type="subcellular location">
    <subcellularLocation>
        <location evidence="1">Cytoplasm</location>
    </subcellularLocation>
</comment>
<comment type="similarity">
    <text evidence="1">Belongs to the endoribonuclease YbeY family.</text>
</comment>
<proteinExistence type="inferred from homology"/>
<dbReference type="EC" id="3.1.-.-" evidence="1"/>
<dbReference type="EMBL" id="AE017308">
    <property type="protein sequence ID" value="AAT27834.1"/>
    <property type="molecule type" value="Genomic_DNA"/>
</dbReference>
<dbReference type="RefSeq" id="WP_011264868.1">
    <property type="nucleotide sequence ID" value="NC_006908.1"/>
</dbReference>
<dbReference type="SMR" id="Q6KHU4"/>
<dbReference type="STRING" id="267748.MMOB3480"/>
<dbReference type="KEGG" id="mmo:MMOB3480"/>
<dbReference type="eggNOG" id="COG0319">
    <property type="taxonomic scope" value="Bacteria"/>
</dbReference>
<dbReference type="HOGENOM" id="CLU_106710_3_0_14"/>
<dbReference type="OrthoDB" id="9807740at2"/>
<dbReference type="Proteomes" id="UP000009072">
    <property type="component" value="Chromosome"/>
</dbReference>
<dbReference type="GO" id="GO:0005737">
    <property type="term" value="C:cytoplasm"/>
    <property type="evidence" value="ECO:0007669"/>
    <property type="project" value="UniProtKB-SubCell"/>
</dbReference>
<dbReference type="GO" id="GO:0004222">
    <property type="term" value="F:metalloendopeptidase activity"/>
    <property type="evidence" value="ECO:0007669"/>
    <property type="project" value="InterPro"/>
</dbReference>
<dbReference type="GO" id="GO:0004521">
    <property type="term" value="F:RNA endonuclease activity"/>
    <property type="evidence" value="ECO:0007669"/>
    <property type="project" value="UniProtKB-UniRule"/>
</dbReference>
<dbReference type="GO" id="GO:0008270">
    <property type="term" value="F:zinc ion binding"/>
    <property type="evidence" value="ECO:0007669"/>
    <property type="project" value="UniProtKB-UniRule"/>
</dbReference>
<dbReference type="GO" id="GO:0006364">
    <property type="term" value="P:rRNA processing"/>
    <property type="evidence" value="ECO:0007669"/>
    <property type="project" value="UniProtKB-UniRule"/>
</dbReference>
<dbReference type="Gene3D" id="3.40.390.30">
    <property type="entry name" value="Metalloproteases ('zincins'), catalytic domain"/>
    <property type="match status" value="1"/>
</dbReference>
<dbReference type="HAMAP" id="MF_00009">
    <property type="entry name" value="Endoribonucl_YbeY"/>
    <property type="match status" value="1"/>
</dbReference>
<dbReference type="InterPro" id="IPR023091">
    <property type="entry name" value="MetalPrtase_cat_dom_sf_prd"/>
</dbReference>
<dbReference type="InterPro" id="IPR002036">
    <property type="entry name" value="YbeY"/>
</dbReference>
<dbReference type="NCBIfam" id="TIGR00043">
    <property type="entry name" value="rRNA maturation RNase YbeY"/>
    <property type="match status" value="1"/>
</dbReference>
<dbReference type="PANTHER" id="PTHR46986">
    <property type="entry name" value="ENDORIBONUCLEASE YBEY, CHLOROPLASTIC"/>
    <property type="match status" value="1"/>
</dbReference>
<dbReference type="PANTHER" id="PTHR46986:SF1">
    <property type="entry name" value="ENDORIBONUCLEASE YBEY, CHLOROPLASTIC"/>
    <property type="match status" value="1"/>
</dbReference>
<dbReference type="Pfam" id="PF02130">
    <property type="entry name" value="YbeY"/>
    <property type="match status" value="1"/>
</dbReference>
<dbReference type="SUPFAM" id="SSF55486">
    <property type="entry name" value="Metalloproteases ('zincins'), catalytic domain"/>
    <property type="match status" value="1"/>
</dbReference>
<organism>
    <name type="scientific">Mycoplasma mobile (strain ATCC 43663 / 163K / NCTC 11711)</name>
    <name type="common">Mesomycoplasma mobile</name>
    <dbReference type="NCBI Taxonomy" id="267748"/>
    <lineage>
        <taxon>Bacteria</taxon>
        <taxon>Bacillati</taxon>
        <taxon>Mycoplasmatota</taxon>
        <taxon>Mycoplasmoidales</taxon>
        <taxon>Metamycoplasmataceae</taxon>
        <taxon>Mesomycoplasma</taxon>
    </lineage>
</organism>
<keyword id="KW-0963">Cytoplasm</keyword>
<keyword id="KW-0255">Endonuclease</keyword>
<keyword id="KW-0378">Hydrolase</keyword>
<keyword id="KW-0479">Metal-binding</keyword>
<keyword id="KW-0540">Nuclease</keyword>
<keyword id="KW-1185">Reference proteome</keyword>
<keyword id="KW-0690">Ribosome biogenesis</keyword>
<keyword id="KW-0698">rRNA processing</keyword>
<keyword id="KW-0862">Zinc</keyword>
<feature type="chain" id="PRO_0000102489" description="Endoribonuclease YbeY">
    <location>
        <begin position="1"/>
        <end position="152"/>
    </location>
</feature>
<feature type="binding site" evidence="1">
    <location>
        <position position="116"/>
    </location>
    <ligand>
        <name>Zn(2+)</name>
        <dbReference type="ChEBI" id="CHEBI:29105"/>
        <note>catalytic</note>
    </ligand>
</feature>
<feature type="binding site" evidence="1">
    <location>
        <position position="120"/>
    </location>
    <ligand>
        <name>Zn(2+)</name>
        <dbReference type="ChEBI" id="CHEBI:29105"/>
        <note>catalytic</note>
    </ligand>
</feature>
<feature type="binding site" evidence="1">
    <location>
        <position position="126"/>
    </location>
    <ligand>
        <name>Zn(2+)</name>
        <dbReference type="ChEBI" id="CHEBI:29105"/>
        <note>catalytic</note>
    </ligand>
</feature>
<gene>
    <name evidence="1" type="primary">ybeY</name>
    <name type="ordered locus">MMOB3480</name>
</gene>